<proteinExistence type="inferred from homology"/>
<name>SLYA_ECO55</name>
<protein>
    <recommendedName>
        <fullName evidence="1">Transcriptional regulator SlyA</fullName>
    </recommendedName>
</protein>
<gene>
    <name evidence="1" type="primary">slyA</name>
    <name type="ordered locus">EC55989_1810</name>
</gene>
<organism>
    <name type="scientific">Escherichia coli (strain 55989 / EAEC)</name>
    <dbReference type="NCBI Taxonomy" id="585055"/>
    <lineage>
        <taxon>Bacteria</taxon>
        <taxon>Pseudomonadati</taxon>
        <taxon>Pseudomonadota</taxon>
        <taxon>Gammaproteobacteria</taxon>
        <taxon>Enterobacterales</taxon>
        <taxon>Enterobacteriaceae</taxon>
        <taxon>Escherichia</taxon>
    </lineage>
</organism>
<feature type="chain" id="PRO_1000188007" description="Transcriptional regulator SlyA">
    <location>
        <begin position="1"/>
        <end position="144"/>
    </location>
</feature>
<feature type="domain" description="HTH marR-type" evidence="1">
    <location>
        <begin position="2"/>
        <end position="135"/>
    </location>
</feature>
<feature type="DNA-binding region" description="H-T-H motif" evidence="1">
    <location>
        <begin position="49"/>
        <end position="72"/>
    </location>
</feature>
<sequence length="144" mass="16353">MESPLGSDLARLVRIWRALIDHRLKPLELTQTHWVTLHNIHQLPPDQSQIQLAKAIGIEQPSLVRTLDQLEEKGLISRQTCASDRRAKRIKLTEKAEPLISEMEAVINKTRAEILHGISAEELEQLITLIAKLEHNIIELQAKG</sequence>
<reference key="1">
    <citation type="journal article" date="2009" name="PLoS Genet.">
        <title>Organised genome dynamics in the Escherichia coli species results in highly diverse adaptive paths.</title>
        <authorList>
            <person name="Touchon M."/>
            <person name="Hoede C."/>
            <person name="Tenaillon O."/>
            <person name="Barbe V."/>
            <person name="Baeriswyl S."/>
            <person name="Bidet P."/>
            <person name="Bingen E."/>
            <person name="Bonacorsi S."/>
            <person name="Bouchier C."/>
            <person name="Bouvet O."/>
            <person name="Calteau A."/>
            <person name="Chiapello H."/>
            <person name="Clermont O."/>
            <person name="Cruveiller S."/>
            <person name="Danchin A."/>
            <person name="Diard M."/>
            <person name="Dossat C."/>
            <person name="Karoui M.E."/>
            <person name="Frapy E."/>
            <person name="Garry L."/>
            <person name="Ghigo J.M."/>
            <person name="Gilles A.M."/>
            <person name="Johnson J."/>
            <person name="Le Bouguenec C."/>
            <person name="Lescat M."/>
            <person name="Mangenot S."/>
            <person name="Martinez-Jehanne V."/>
            <person name="Matic I."/>
            <person name="Nassif X."/>
            <person name="Oztas S."/>
            <person name="Petit M.A."/>
            <person name="Pichon C."/>
            <person name="Rouy Z."/>
            <person name="Ruf C.S."/>
            <person name="Schneider D."/>
            <person name="Tourret J."/>
            <person name="Vacherie B."/>
            <person name="Vallenet D."/>
            <person name="Medigue C."/>
            <person name="Rocha E.P.C."/>
            <person name="Denamur E."/>
        </authorList>
    </citation>
    <scope>NUCLEOTIDE SEQUENCE [LARGE SCALE GENOMIC DNA]</scope>
    <source>
        <strain>55989 / EAEC</strain>
    </source>
</reference>
<keyword id="KW-0010">Activator</keyword>
<keyword id="KW-0238">DNA-binding</keyword>
<keyword id="KW-1185">Reference proteome</keyword>
<keyword id="KW-0678">Repressor</keyword>
<keyword id="KW-0804">Transcription</keyword>
<keyword id="KW-0805">Transcription regulation</keyword>
<evidence type="ECO:0000255" key="1">
    <source>
        <dbReference type="HAMAP-Rule" id="MF_01819"/>
    </source>
</evidence>
<accession>B7L5J5</accession>
<dbReference type="EMBL" id="CU928145">
    <property type="protein sequence ID" value="CAU97669.1"/>
    <property type="molecule type" value="Genomic_DNA"/>
</dbReference>
<dbReference type="RefSeq" id="WP_001296943.1">
    <property type="nucleotide sequence ID" value="NC_011748.1"/>
</dbReference>
<dbReference type="SMR" id="B7L5J5"/>
<dbReference type="GeneID" id="93775796"/>
<dbReference type="KEGG" id="eck:EC55989_1810"/>
<dbReference type="HOGENOM" id="CLU_083287_18_2_6"/>
<dbReference type="Proteomes" id="UP000000746">
    <property type="component" value="Chromosome"/>
</dbReference>
<dbReference type="GO" id="GO:0003677">
    <property type="term" value="F:DNA binding"/>
    <property type="evidence" value="ECO:0007669"/>
    <property type="project" value="UniProtKB-UniRule"/>
</dbReference>
<dbReference type="GO" id="GO:0003700">
    <property type="term" value="F:DNA-binding transcription factor activity"/>
    <property type="evidence" value="ECO:0007669"/>
    <property type="project" value="UniProtKB-UniRule"/>
</dbReference>
<dbReference type="GO" id="GO:0006950">
    <property type="term" value="P:response to stress"/>
    <property type="evidence" value="ECO:0007669"/>
    <property type="project" value="TreeGrafter"/>
</dbReference>
<dbReference type="FunFam" id="1.10.10.10:FF:000261">
    <property type="entry name" value="Transcriptional regulator SlyA"/>
    <property type="match status" value="1"/>
</dbReference>
<dbReference type="Gene3D" id="1.10.10.10">
    <property type="entry name" value="Winged helix-like DNA-binding domain superfamily/Winged helix DNA-binding domain"/>
    <property type="match status" value="1"/>
</dbReference>
<dbReference type="HAMAP" id="MF_01819">
    <property type="entry name" value="HTH_type_SlyA"/>
    <property type="match status" value="1"/>
</dbReference>
<dbReference type="InterPro" id="IPR000835">
    <property type="entry name" value="HTH_MarR-typ"/>
</dbReference>
<dbReference type="InterPro" id="IPR039422">
    <property type="entry name" value="MarR/SlyA-like"/>
</dbReference>
<dbReference type="InterPro" id="IPR023187">
    <property type="entry name" value="Tscrpt_reg_MarR-type_CS"/>
</dbReference>
<dbReference type="InterPro" id="IPR023071">
    <property type="entry name" value="Tscrpt_reg_SlyA"/>
</dbReference>
<dbReference type="InterPro" id="IPR036388">
    <property type="entry name" value="WH-like_DNA-bd_sf"/>
</dbReference>
<dbReference type="InterPro" id="IPR036390">
    <property type="entry name" value="WH_DNA-bd_sf"/>
</dbReference>
<dbReference type="NCBIfam" id="NF002926">
    <property type="entry name" value="PRK03573.1"/>
    <property type="match status" value="1"/>
</dbReference>
<dbReference type="PANTHER" id="PTHR33164:SF64">
    <property type="entry name" value="TRANSCRIPTIONAL REGULATOR SLYA"/>
    <property type="match status" value="1"/>
</dbReference>
<dbReference type="PANTHER" id="PTHR33164">
    <property type="entry name" value="TRANSCRIPTIONAL REGULATOR, MARR FAMILY"/>
    <property type="match status" value="1"/>
</dbReference>
<dbReference type="Pfam" id="PF01047">
    <property type="entry name" value="MarR"/>
    <property type="match status" value="1"/>
</dbReference>
<dbReference type="PRINTS" id="PR00598">
    <property type="entry name" value="HTHMARR"/>
</dbReference>
<dbReference type="SMART" id="SM00347">
    <property type="entry name" value="HTH_MARR"/>
    <property type="match status" value="1"/>
</dbReference>
<dbReference type="SUPFAM" id="SSF46785">
    <property type="entry name" value="Winged helix' DNA-binding domain"/>
    <property type="match status" value="1"/>
</dbReference>
<dbReference type="PROSITE" id="PS01117">
    <property type="entry name" value="HTH_MARR_1"/>
    <property type="match status" value="1"/>
</dbReference>
<dbReference type="PROSITE" id="PS50995">
    <property type="entry name" value="HTH_MARR_2"/>
    <property type="match status" value="1"/>
</dbReference>
<comment type="function">
    <text evidence="1">Transcription regulator that can specifically activate or repress expression of target genes.</text>
</comment>
<comment type="subunit">
    <text evidence="1">Homodimer.</text>
</comment>
<comment type="similarity">
    <text evidence="1">Belongs to the SlyA family.</text>
</comment>